<gene>
    <name evidence="1" type="primary">mpa</name>
    <name type="ordered locus">TBMG_01865</name>
</gene>
<keyword id="KW-0067">ATP-binding</keyword>
<keyword id="KW-0143">Chaperone</keyword>
<keyword id="KW-0175">Coiled coil</keyword>
<keyword id="KW-0547">Nucleotide-binding</keyword>
<keyword id="KW-0647">Proteasome</keyword>
<sequence>MGESERSEAFGIPRDSPLSSGDAAELEQLRREAAVLREQLENAVGSHAPTRSARDIHQLEARIDSLAARNSKLMETLKEARQQLLALREEVDRLGQPPSGYGVLLATHDDDTVDVFTSGRKMRLTCSPNIDAASLKKGQTVRLNEALTVVEAGTFEAVGEISTLREILADGHRALVVGHADEERVVWLADPLIAEDLPDGLPEALNDDTRPRKLRPGDSLLVDTKAGYAFERIPKAEVEDLVLEEVPDVSYADIGGLSRQIEQIRDAVELPFLHKELYREYSLRPPKGVLLYGPPGCGKTLIAKAVANSLAKKMAEVRGDDAHEAKSYFLNIKGPELLNKFVGETERHIRLIFQRAREKASEGTPVIVFFDEMDSIFRTRGTGVSSDVETTVVPQLLSEIDGVEGLENVIVIGASNREDMIDPAILRPGRLDVKIKIERPDAEAAQDIYSKYLTEFLPVHADDLAEFDGDRSACIKAMIEKVVDRMYAEIDDNRFLEVTYANGDKEVMYFKDFNSGAMIQNVVDRAKKNAIKSVLETGQPGLRIQHLLDSIVDEFAENEDLPNTTNPDDWARISGKKGERIVYIRTLVTGKSSSASRAIDTESNLGQYL</sequence>
<reference key="1">
    <citation type="submission" date="2009-07" db="EMBL/GenBank/DDBJ databases">
        <title>The genome sequence of Mycobacterium tuberculosis strain KZN 1435.</title>
        <authorList>
            <person name="Murray M."/>
            <person name="Pillay M."/>
            <person name="Borowsky M.L."/>
            <person name="Young S.K."/>
            <person name="Zeng Q."/>
            <person name="Koehrsen M."/>
            <person name="Alvarado L."/>
            <person name="Berlin A.M."/>
            <person name="Borenstein D."/>
            <person name="Chen Z."/>
            <person name="Engels R."/>
            <person name="Freedman E."/>
            <person name="Gellesch M."/>
            <person name="Goldberg J."/>
            <person name="Griggs A."/>
            <person name="Gujja S."/>
            <person name="Heiman D.I."/>
            <person name="Hepburn T.A."/>
            <person name="Howarth C."/>
            <person name="Jen D."/>
            <person name="Larson L."/>
            <person name="Lewis B."/>
            <person name="Mehta T."/>
            <person name="Park D."/>
            <person name="Pearson M."/>
            <person name="Roberts A."/>
            <person name="Saif S."/>
            <person name="Shea T.D."/>
            <person name="Shenoy N."/>
            <person name="Sisk P."/>
            <person name="Stolte C."/>
            <person name="Sykes S.N."/>
            <person name="Walk T."/>
            <person name="White J."/>
            <person name="Yandava C."/>
            <person name="Haas B."/>
            <person name="Nusbaum C."/>
            <person name="Galagan J."/>
            <person name="Birren B."/>
        </authorList>
    </citation>
    <scope>NUCLEOTIDE SEQUENCE [LARGE SCALE GENOMIC DNA]</scope>
    <source>
        <strain>KZN 1435 / MDR</strain>
    </source>
</reference>
<feature type="chain" id="PRO_0000397005" description="Proteasome-associated ATPase">
    <location>
        <begin position="1"/>
        <end position="609"/>
    </location>
</feature>
<feature type="region of interest" description="Disordered" evidence="2">
    <location>
        <begin position="1"/>
        <end position="24"/>
    </location>
</feature>
<feature type="region of interest" description="Docks into pockets in the proteasome alpha-ring" evidence="1">
    <location>
        <begin position="608"/>
        <end position="609"/>
    </location>
</feature>
<feature type="coiled-coil region" evidence="1">
    <location>
        <begin position="20"/>
        <end position="96"/>
    </location>
</feature>
<feature type="binding site" evidence="1">
    <location>
        <begin position="296"/>
        <end position="301"/>
    </location>
    <ligand>
        <name>ATP</name>
        <dbReference type="ChEBI" id="CHEBI:30616"/>
    </ligand>
</feature>
<comment type="function">
    <text evidence="1">ATPase which is responsible for recognizing, binding, unfolding and translocation of pupylated proteins into the bacterial 20S proteasome core particle. May be essential for opening the gate of the 20S proteasome via an interaction with its C-terminus, thereby allowing substrate entry and access to the site of proteolysis. Thus, the C-termini of the proteasomal ATPase may function like a 'key in a lock' to induce gate opening and therefore regulate proteolysis.</text>
</comment>
<comment type="pathway">
    <text evidence="1">Protein degradation; proteasomal Pup-dependent pathway.</text>
</comment>
<comment type="subunit">
    <text evidence="1">Homohexamer. Assembles into a hexameric ring structure that caps the 20S proteasome core. Strongly interacts with the prokaryotic ubiquitin-like protein Pup through a hydrophobic interface; the interacting region of ARC lies in its N-terminal coiled-coil domain. There is one Pup binding site per ARC hexamer ring. Upon ATP-binding, the C-terminus of ARC interacts with the alpha-rings of the proteasome core, possibly by binding to the intersubunit pockets.</text>
</comment>
<comment type="domain">
    <text evidence="1">Consists of three main regions, an N-terminal coiled-coil domain that binds to protein Pup and functions as a docking station, an interdomain involved in ARC hexamerization, and a C-terminal ATPase domain of the AAA type.</text>
</comment>
<comment type="similarity">
    <text evidence="1">Belongs to the AAA ATPase family.</text>
</comment>
<accession>C6DPU6</accession>
<evidence type="ECO:0000255" key="1">
    <source>
        <dbReference type="HAMAP-Rule" id="MF_02112"/>
    </source>
</evidence>
<evidence type="ECO:0000256" key="2">
    <source>
        <dbReference type="SAM" id="MobiDB-lite"/>
    </source>
</evidence>
<name>ARC_MYCTK</name>
<organism>
    <name type="scientific">Mycobacterium tuberculosis (strain KZN 1435 / MDR)</name>
    <dbReference type="NCBI Taxonomy" id="478434"/>
    <lineage>
        <taxon>Bacteria</taxon>
        <taxon>Bacillati</taxon>
        <taxon>Actinomycetota</taxon>
        <taxon>Actinomycetes</taxon>
        <taxon>Mycobacteriales</taxon>
        <taxon>Mycobacteriaceae</taxon>
        <taxon>Mycobacterium</taxon>
        <taxon>Mycobacterium tuberculosis complex</taxon>
    </lineage>
</organism>
<protein>
    <recommendedName>
        <fullName evidence="1">Proteasome-associated ATPase</fullName>
    </recommendedName>
    <alternativeName>
        <fullName evidence="1">AAA ATPase forming ring-shaped complexes</fullName>
        <shortName evidence="1">ARC</shortName>
    </alternativeName>
    <alternativeName>
        <fullName evidence="1">Mycobacterial proteasome ATPase</fullName>
    </alternativeName>
</protein>
<dbReference type="EMBL" id="CP001658">
    <property type="protein sequence ID" value="ACT24929.1"/>
    <property type="molecule type" value="Genomic_DNA"/>
</dbReference>
<dbReference type="SMR" id="C6DPU6"/>
<dbReference type="KEGG" id="mtb:TBMG_01865"/>
<dbReference type="PATRIC" id="fig|478434.13.peg.2254"/>
<dbReference type="HOGENOM" id="CLU_036054_0_0_11"/>
<dbReference type="UniPathway" id="UPA00997"/>
<dbReference type="GO" id="GO:0000502">
    <property type="term" value="C:proteasome complex"/>
    <property type="evidence" value="ECO:0007669"/>
    <property type="project" value="UniProtKB-KW"/>
</dbReference>
<dbReference type="GO" id="GO:0005524">
    <property type="term" value="F:ATP binding"/>
    <property type="evidence" value="ECO:0007669"/>
    <property type="project" value="UniProtKB-UniRule"/>
</dbReference>
<dbReference type="GO" id="GO:0016887">
    <property type="term" value="F:ATP hydrolysis activity"/>
    <property type="evidence" value="ECO:0007669"/>
    <property type="project" value="UniProtKB-UniRule"/>
</dbReference>
<dbReference type="GO" id="GO:0019941">
    <property type="term" value="P:modification-dependent protein catabolic process"/>
    <property type="evidence" value="ECO:0007669"/>
    <property type="project" value="InterPro"/>
</dbReference>
<dbReference type="GO" id="GO:0010498">
    <property type="term" value="P:proteasomal protein catabolic process"/>
    <property type="evidence" value="ECO:0007669"/>
    <property type="project" value="InterPro"/>
</dbReference>
<dbReference type="FunFam" id="1.10.8.60:FF:000122">
    <property type="entry name" value="AAA ATPase forming ring-shaped complexes"/>
    <property type="match status" value="1"/>
</dbReference>
<dbReference type="FunFam" id="1.20.5.170:FF:000018">
    <property type="entry name" value="AAA ATPase forming ring-shaped complexes"/>
    <property type="match status" value="1"/>
</dbReference>
<dbReference type="FunFam" id="2.40.50.140:FF:000169">
    <property type="entry name" value="AAA ATPase forming ring-shaped complexes"/>
    <property type="match status" value="1"/>
</dbReference>
<dbReference type="FunFam" id="3.40.50.300:FF:000155">
    <property type="entry name" value="AAA ATPase forming ring-shaped complexes"/>
    <property type="match status" value="1"/>
</dbReference>
<dbReference type="Gene3D" id="1.10.8.60">
    <property type="match status" value="1"/>
</dbReference>
<dbReference type="Gene3D" id="1.20.5.170">
    <property type="match status" value="1"/>
</dbReference>
<dbReference type="Gene3D" id="2.40.50.140">
    <property type="entry name" value="Nucleic acid-binding proteins"/>
    <property type="match status" value="2"/>
</dbReference>
<dbReference type="Gene3D" id="3.40.50.300">
    <property type="entry name" value="P-loop containing nucleotide triphosphate hydrolases"/>
    <property type="match status" value="1"/>
</dbReference>
<dbReference type="HAMAP" id="MF_02112">
    <property type="entry name" value="ARC_ATPase"/>
    <property type="match status" value="1"/>
</dbReference>
<dbReference type="InterPro" id="IPR003593">
    <property type="entry name" value="AAA+_ATPase"/>
</dbReference>
<dbReference type="InterPro" id="IPR050168">
    <property type="entry name" value="AAA_ATPase_domain"/>
</dbReference>
<dbReference type="InterPro" id="IPR003959">
    <property type="entry name" value="ATPase_AAA_core"/>
</dbReference>
<dbReference type="InterPro" id="IPR003960">
    <property type="entry name" value="ATPase_AAA_CS"/>
</dbReference>
<dbReference type="InterPro" id="IPR012340">
    <property type="entry name" value="NA-bd_OB-fold"/>
</dbReference>
<dbReference type="InterPro" id="IPR027417">
    <property type="entry name" value="P-loop_NTPase"/>
</dbReference>
<dbReference type="InterPro" id="IPR032501">
    <property type="entry name" value="Prot_ATP_ID_OB_2nd"/>
</dbReference>
<dbReference type="InterPro" id="IPR041626">
    <property type="entry name" value="Prot_ATP_ID_OB_N"/>
</dbReference>
<dbReference type="InterPro" id="IPR022482">
    <property type="entry name" value="Proteasome_ATPase"/>
</dbReference>
<dbReference type="NCBIfam" id="TIGR03689">
    <property type="entry name" value="pup_AAA"/>
    <property type="match status" value="1"/>
</dbReference>
<dbReference type="PANTHER" id="PTHR23077">
    <property type="entry name" value="AAA-FAMILY ATPASE"/>
    <property type="match status" value="1"/>
</dbReference>
<dbReference type="PANTHER" id="PTHR23077:SF144">
    <property type="entry name" value="PROTEASOME-ASSOCIATED ATPASE"/>
    <property type="match status" value="1"/>
</dbReference>
<dbReference type="Pfam" id="PF00004">
    <property type="entry name" value="AAA"/>
    <property type="match status" value="1"/>
</dbReference>
<dbReference type="Pfam" id="PF16450">
    <property type="entry name" value="Prot_ATP_ID_OB_C"/>
    <property type="match status" value="1"/>
</dbReference>
<dbReference type="Pfam" id="PF17758">
    <property type="entry name" value="Prot_ATP_ID_OB_N"/>
    <property type="match status" value="1"/>
</dbReference>
<dbReference type="SMART" id="SM00382">
    <property type="entry name" value="AAA"/>
    <property type="match status" value="1"/>
</dbReference>
<dbReference type="SUPFAM" id="SSF52540">
    <property type="entry name" value="P-loop containing nucleoside triphosphate hydrolases"/>
    <property type="match status" value="1"/>
</dbReference>
<dbReference type="PROSITE" id="PS00674">
    <property type="entry name" value="AAA"/>
    <property type="match status" value="1"/>
</dbReference>
<proteinExistence type="inferred from homology"/>